<comment type="function">
    <text evidence="11">Subunit of non-clathrin- and clathrin-associated adaptor protein complex 3 (AP-3) that plays a role in protein sorting in the late-Golgi/trans-Golgi network (TGN) and/or endosomes. The AP complexes mediate both the recruitment of clathrin to membranes and the recognition of sorting signals within the cytosolic tails of transmembrane cargo molecules. AP-3 appears to be involved in the sorting of a subset of transmembrane proteins targeted to lysosomes and lysosome-related organelles. In concert with the BLOC-1 complex, AP-3 is required to target cargos into vesicles assembled at cell bodies for delivery into neurites and nerve terminals.</text>
</comment>
<comment type="subunit">
    <text evidence="1 6 11">Adaptor protein complex 3 (AP-3) is a heterotetramer composed of two large adaptins (delta-type subunit AP3D1 and beta-type subunit AP3B1 or AP3B2), a medium adaptin (mu-type subunit AP3M1 or AP3M2) and a small adaptin (sigma-type subunit APS1 or AP3S2) (Probable). AP-3 associates with the BLOC-1 complex (By similarity). Interacts with KIF3A; interaction is direct; interaction is impaired by pyrophosphorylation of AP3B1 (PubMed:19934039).</text>
</comment>
<comment type="interaction">
    <interactant intactId="EBI-1044383">
        <id>O00203</id>
    </interactant>
    <interactant intactId="EBI-25928834">
        <id>A0A0S2Z5Q7</id>
        <label>ALS2</label>
    </interactant>
    <organismsDiffer>false</organismsDiffer>
    <experiments>3</experiments>
</comment>
<comment type="interaction">
    <interactant intactId="EBI-1044383">
        <id>O00203</id>
    </interactant>
    <interactant intactId="EBI-10988864">
        <id>P46379-2</id>
        <label>BAG6</label>
    </interactant>
    <organismsDiffer>false</organismsDiffer>
    <experiments>3</experiments>
</comment>
<comment type="interaction">
    <interactant intactId="EBI-1044383">
        <id>O00203</id>
    </interactant>
    <interactant intactId="EBI-395638">
        <id>O14645</id>
        <label>DNALI1</label>
    </interactant>
    <organismsDiffer>false</organismsDiffer>
    <experiments>3</experiments>
</comment>
<comment type="interaction">
    <interactant intactId="EBI-1044383">
        <id>O00203</id>
    </interactant>
    <interactant intactId="EBI-466029">
        <id>P42858</id>
        <label>HTT</label>
    </interactant>
    <organismsDiffer>false</organismsDiffer>
    <experiments>6</experiments>
</comment>
<comment type="interaction">
    <interactant intactId="EBI-1044383">
        <id>O00203</id>
    </interactant>
    <interactant intactId="EBI-5323863">
        <id>Q5S007</id>
        <label>LRRK2</label>
    </interactant>
    <organismsDiffer>false</organismsDiffer>
    <experiments>2</experiments>
</comment>
<comment type="interaction">
    <interactant intactId="EBI-1044383">
        <id>O00203</id>
    </interactant>
    <interactant intactId="EBI-748974">
        <id>Q96CV9</id>
        <label>OPTN</label>
    </interactant>
    <organismsDiffer>false</organismsDiffer>
    <experiments>3</experiments>
</comment>
<comment type="interaction">
    <interactant intactId="EBI-1044383">
        <id>O00203</id>
    </interactant>
    <interactant intactId="EBI-985879">
        <id>P37840</id>
        <label>SNCA</label>
    </interactant>
    <organismsDiffer>false</organismsDiffer>
    <experiments>3</experiments>
</comment>
<comment type="interaction">
    <interactant intactId="EBI-15816315">
        <id>O00203-1</id>
    </interactant>
    <interactant intactId="EBI-2691178">
        <id>Q12955</id>
        <label>ANK3</label>
    </interactant>
    <organismsDiffer>false</organismsDiffer>
    <experiments>2</experiments>
</comment>
<comment type="interaction">
    <interactant intactId="EBI-15816315">
        <id>O00203-1</id>
    </interactant>
    <interactant intactId="EBI-1104844">
        <id>Q9Y496</id>
        <label>KIF3A</label>
    </interactant>
    <organismsDiffer>false</organismsDiffer>
    <experiments>5</experiments>
</comment>
<comment type="subcellular location">
    <subcellularLocation>
        <location evidence="11">Cytoplasmic vesicle</location>
        <location evidence="11">Clathrin-coated vesicle membrane</location>
        <topology evidence="10">Peripheral membrane protein</topology>
        <orientation evidence="10">Cytoplasmic side</orientation>
    </subcellularLocation>
    <subcellularLocation>
        <location evidence="11">Golgi apparatus</location>
    </subcellularLocation>
    <text evidence="11">Component of the coat surrounding the cytoplasmic face of coated vesicles located at the Golgi complex.</text>
</comment>
<comment type="alternative products">
    <event type="alternative splicing"/>
    <isoform>
        <id>O00203-1</id>
        <name>1</name>
        <sequence type="displayed"/>
    </isoform>
    <isoform>
        <id>O00203-3</id>
        <name>2</name>
        <sequence type="described" ref="VSP_054708"/>
    </isoform>
</comment>
<comment type="tissue specificity">
    <text evidence="7 8">Ubiquitously expressed.</text>
</comment>
<comment type="PTM">
    <text evidence="8">Phosphorylated on serine residues.</text>
</comment>
<comment type="PTM">
    <text evidence="6">Pyrophosphorylation by 5-diphosphoinositol pentakisphosphate (5-IP7) impairs interaction with KIF3A (PubMed:19934039). Serine pyrophosphorylation is achieved by Mg(2+)-dependent, but enzyme independent transfer of a beta-phosphate from a inositol pyrophosphate to a pre-phosphorylated serine residue (PubMed:19934039).</text>
</comment>
<comment type="disease" evidence="3">
    <disease id="DI-00558">
        <name>Hermansky-Pudlak syndrome 2</name>
        <acronym>HPS2</acronym>
        <description>A form of Hermansky-Pudlak syndrome, a genetically heterogeneous autosomal recessive disorder characterized by oculocutaneous albinism, bleeding due to platelet storage pool deficiency, and lysosomal storage defects. This syndrome results from defects of diverse cytoplasmic organelles including melanosomes, platelet dense granules and lysosomes. Ceroid storage in the lungs is associated with pulmonary fibrosis, a common cause of premature death in individuals with HPS. HPS2 differs from the other forms of HPS in that it includes immunodeficiency in its phenotype and patients with HPS2 have an increased susceptibility to infections.</description>
        <dbReference type="MIM" id="608233"/>
    </disease>
    <text>The disease is caused by variants affecting the gene represented in this entry.</text>
</comment>
<comment type="similarity">
    <text evidence="10">Belongs to the adaptor complexes large subunit family.</text>
</comment>
<comment type="sequence caution" evidence="10">
    <conflict type="frameshift">
        <sequence resource="EMBL-CDS" id="CAD97982"/>
    </conflict>
</comment>
<comment type="sequence caution" evidence="10">
    <conflict type="miscellaneous discrepancy">
        <sequence resource="EMBL-CDS" id="CAD97982"/>
    </conflict>
    <text>Wrong choice of CDS.</text>
</comment>
<comment type="online information" name="AP3B1base">
    <link uri="https://databases.lovd.nl/shared/genes/AP3B1"/>
    <text>AP3B1 mutation db</text>
</comment>
<comment type="online information" name="Albinism database (ADB)">
    <link uri="http://www.ifpcs.org/albinism/hps2mut.htm"/>
    <text>AP3B1 mutations</text>
</comment>
<evidence type="ECO:0000250" key="1">
    <source>
        <dbReference type="UniProtKB" id="Q9Z1T1"/>
    </source>
</evidence>
<evidence type="ECO:0000256" key="2">
    <source>
        <dbReference type="SAM" id="MobiDB-lite"/>
    </source>
</evidence>
<evidence type="ECO:0000269" key="3">
    <source>
    </source>
</evidence>
<evidence type="ECO:0000269" key="4">
    <source>
    </source>
</evidence>
<evidence type="ECO:0000269" key="5">
    <source>
    </source>
</evidence>
<evidence type="ECO:0000269" key="6">
    <source>
    </source>
</evidence>
<evidence type="ECO:0000269" key="7">
    <source>
    </source>
</evidence>
<evidence type="ECO:0000269" key="8">
    <source>
    </source>
</evidence>
<evidence type="ECO:0000303" key="9">
    <source>
    </source>
</evidence>
<evidence type="ECO:0000305" key="10"/>
<evidence type="ECO:0000305" key="11">
    <source>
    </source>
</evidence>
<evidence type="ECO:0007744" key="12">
    <source>
    </source>
</evidence>
<evidence type="ECO:0007744" key="13">
    <source>
    </source>
</evidence>
<evidence type="ECO:0007744" key="14">
    <source>
    </source>
</evidence>
<evidence type="ECO:0007744" key="15">
    <source>
    </source>
</evidence>
<evidence type="ECO:0007744" key="16">
    <source>
    </source>
</evidence>
<evidence type="ECO:0007744" key="17">
    <source>
    </source>
</evidence>
<protein>
    <recommendedName>
        <fullName>AP-3 complex subunit beta-1</fullName>
    </recommendedName>
    <alternativeName>
        <fullName>Adaptor protein complex AP-3 subunit beta-1</fullName>
    </alternativeName>
    <alternativeName>
        <fullName>Adaptor-related protein complex 3 subunit beta-1</fullName>
    </alternativeName>
    <alternativeName>
        <fullName>Beta-3A-adaptin</fullName>
    </alternativeName>
    <alternativeName>
        <fullName>Clathrin assembly protein complex 3 beta-1 large chain</fullName>
    </alternativeName>
</protein>
<feature type="chain" id="PRO_0000193746" description="AP-3 complex subunit beta-1">
    <location>
        <begin position="1"/>
        <end position="1094"/>
    </location>
</feature>
<feature type="region of interest" description="Disordered" evidence="2">
    <location>
        <begin position="1"/>
        <end position="31"/>
    </location>
</feature>
<feature type="region of interest" description="Disordered" evidence="2">
    <location>
        <begin position="268"/>
        <end position="292"/>
    </location>
</feature>
<feature type="region of interest" description="Disordered" evidence="2">
    <location>
        <begin position="662"/>
        <end position="811"/>
    </location>
</feature>
<feature type="compositionally biased region" description="Polar residues" evidence="2">
    <location>
        <begin position="1"/>
        <end position="11"/>
    </location>
</feature>
<feature type="compositionally biased region" description="Basic and acidic residues" evidence="2">
    <location>
        <begin position="666"/>
        <end position="677"/>
    </location>
</feature>
<feature type="compositionally biased region" description="Acidic residues" evidence="2">
    <location>
        <begin position="678"/>
        <end position="696"/>
    </location>
</feature>
<feature type="compositionally biased region" description="Acidic residues" evidence="2">
    <location>
        <begin position="705"/>
        <end position="726"/>
    </location>
</feature>
<feature type="compositionally biased region" description="Basic and acidic residues" evidence="2">
    <location>
        <begin position="727"/>
        <end position="738"/>
    </location>
</feature>
<feature type="compositionally biased region" description="Basic and acidic residues" evidence="2">
    <location>
        <begin position="748"/>
        <end position="764"/>
    </location>
</feature>
<feature type="compositionally biased region" description="Low complexity" evidence="2">
    <location>
        <begin position="765"/>
        <end position="777"/>
    </location>
</feature>
<feature type="compositionally biased region" description="Acidic residues" evidence="2">
    <location>
        <begin position="778"/>
        <end position="791"/>
    </location>
</feature>
<feature type="compositionally biased region" description="Basic and acidic residues" evidence="2">
    <location>
        <begin position="792"/>
        <end position="811"/>
    </location>
</feature>
<feature type="modified residue" description="Phosphoserine" evidence="13 14 16 17">
    <location>
        <position position="276"/>
    </location>
</feature>
<feature type="modified residue" description="Phosphoserine" evidence="12 14 17">
    <location>
        <position position="609"/>
    </location>
</feature>
<feature type="modified residue" description="Phosphoserine" evidence="14">
    <location>
        <position position="750"/>
    </location>
</feature>
<feature type="modified residue" description="Phosphoserine" evidence="14">
    <location>
        <position position="752"/>
    </location>
</feature>
<feature type="splice variant" id="VSP_054708" description="In isoform 2." evidence="9">
    <location>
        <begin position="1"/>
        <end position="49"/>
    </location>
</feature>
<feature type="sequence variant" id="VAR_011595" description="In HPS2." evidence="3">
    <location>
        <begin position="390"/>
        <end position="410"/>
    </location>
</feature>
<feature type="sequence variant" id="VAR_011596" description="In HPS2; dbSNP:rs121908904." evidence="3">
    <original>L</original>
    <variation>R</variation>
    <location>
        <position position="580"/>
    </location>
</feature>
<feature type="sequence variant" id="VAR_058404" description="In dbSNP:rs6453373." evidence="4 5 7 8 15">
    <original>V</original>
    <variation>E</variation>
    <location>
        <position position="585"/>
    </location>
</feature>
<feature type="sequence conflict" description="In Ref. 3; CAD97982." evidence="10" ref="3">
    <original>K</original>
    <variation>R</variation>
    <location>
        <position position="168"/>
    </location>
</feature>
<feature type="sequence conflict" description="In Ref. 3; CAD97982." evidence="10" ref="3">
    <original>S</original>
    <variation>P</variation>
    <location>
        <position position="379"/>
    </location>
</feature>
<feature type="sequence conflict" description="In Ref. 1; AAD03778." evidence="10" ref="1">
    <location>
        <position position="804"/>
    </location>
</feature>
<organism>
    <name type="scientific">Homo sapiens</name>
    <name type="common">Human</name>
    <dbReference type="NCBI Taxonomy" id="9606"/>
    <lineage>
        <taxon>Eukaryota</taxon>
        <taxon>Metazoa</taxon>
        <taxon>Chordata</taxon>
        <taxon>Craniata</taxon>
        <taxon>Vertebrata</taxon>
        <taxon>Euteleostomi</taxon>
        <taxon>Mammalia</taxon>
        <taxon>Eutheria</taxon>
        <taxon>Euarchontoglires</taxon>
        <taxon>Primates</taxon>
        <taxon>Haplorrhini</taxon>
        <taxon>Catarrhini</taxon>
        <taxon>Hominidae</taxon>
        <taxon>Homo</taxon>
    </lineage>
</organism>
<proteinExistence type="evidence at protein level"/>
<reference key="1">
    <citation type="journal article" date="1997" name="J. Cell Biol.">
        <title>Characterization of the adaptor-related protein complex, AP-3.</title>
        <authorList>
            <person name="Simpson F."/>
            <person name="Peden A.A."/>
            <person name="Christopoulou L."/>
            <person name="Robinson M.S."/>
        </authorList>
    </citation>
    <scope>NUCLEOTIDE SEQUENCE [MRNA] (ISOFORM 1)</scope>
    <scope>FUNCTION</scope>
    <scope>IDENTIFICATION IN THE AP-3 COMPLEX</scope>
    <scope>TISSUE SPECIFICITY</scope>
    <scope>VARIANT GLU-585</scope>
    <source>
        <tissue>Heart</tissue>
    </source>
</reference>
<reference key="2">
    <citation type="journal article" date="1997" name="J. Biol. Chem.">
        <title>Beta3A-adaptin, a subunit of the adaptor-like complex AP-3.</title>
        <authorList>
            <person name="Dell'Angelica E.C."/>
            <person name="Ooi C.E."/>
            <person name="Bonifacino J.S."/>
        </authorList>
    </citation>
    <scope>NUCLEOTIDE SEQUENCE [MRNA] (ISOFORM 1)</scope>
    <scope>PHOSPHORYLATION</scope>
    <scope>TISSUE SPECIFICITY</scope>
    <scope>VARIANT GLU-585</scope>
    <source>
        <tissue>Pancreas</tissue>
    </source>
</reference>
<reference key="3">
    <citation type="journal article" date="2007" name="BMC Genomics">
        <title>The full-ORF clone resource of the German cDNA consortium.</title>
        <authorList>
            <person name="Bechtel S."/>
            <person name="Rosenfelder H."/>
            <person name="Duda A."/>
            <person name="Schmidt C.P."/>
            <person name="Ernst U."/>
            <person name="Wellenreuther R."/>
            <person name="Mehrle A."/>
            <person name="Schuster C."/>
            <person name="Bahr A."/>
            <person name="Bloecker H."/>
            <person name="Heubner D."/>
            <person name="Hoerlein A."/>
            <person name="Michel G."/>
            <person name="Wedler H."/>
            <person name="Koehrer K."/>
            <person name="Ottenwaelder B."/>
            <person name="Poustka A."/>
            <person name="Wiemann S."/>
            <person name="Schupp I."/>
        </authorList>
    </citation>
    <scope>NUCLEOTIDE SEQUENCE [LARGE SCALE MRNA] (ISOFORM 2)</scope>
    <scope>VARIANT GLU-585</scope>
    <source>
        <tissue>Colon</tissue>
    </source>
</reference>
<reference key="4">
    <citation type="journal article" date="2004" name="Nature">
        <title>The DNA sequence and comparative analysis of human chromosome 5.</title>
        <authorList>
            <person name="Schmutz J."/>
            <person name="Martin J."/>
            <person name="Terry A."/>
            <person name="Couronne O."/>
            <person name="Grimwood J."/>
            <person name="Lowry S."/>
            <person name="Gordon L.A."/>
            <person name="Scott D."/>
            <person name="Xie G."/>
            <person name="Huang W."/>
            <person name="Hellsten U."/>
            <person name="Tran-Gyamfi M."/>
            <person name="She X."/>
            <person name="Prabhakar S."/>
            <person name="Aerts A."/>
            <person name="Altherr M."/>
            <person name="Bajorek E."/>
            <person name="Black S."/>
            <person name="Branscomb E."/>
            <person name="Caoile C."/>
            <person name="Challacombe J.F."/>
            <person name="Chan Y.M."/>
            <person name="Denys M."/>
            <person name="Detter J.C."/>
            <person name="Escobar J."/>
            <person name="Flowers D."/>
            <person name="Fotopulos D."/>
            <person name="Glavina T."/>
            <person name="Gomez M."/>
            <person name="Gonzales E."/>
            <person name="Goodstein D."/>
            <person name="Grigoriev I."/>
            <person name="Groza M."/>
            <person name="Hammon N."/>
            <person name="Hawkins T."/>
            <person name="Haydu L."/>
            <person name="Israni S."/>
            <person name="Jett J."/>
            <person name="Kadner K."/>
            <person name="Kimball H."/>
            <person name="Kobayashi A."/>
            <person name="Lopez F."/>
            <person name="Lou Y."/>
            <person name="Martinez D."/>
            <person name="Medina C."/>
            <person name="Morgan J."/>
            <person name="Nandkeshwar R."/>
            <person name="Noonan J.P."/>
            <person name="Pitluck S."/>
            <person name="Pollard M."/>
            <person name="Predki P."/>
            <person name="Priest J."/>
            <person name="Ramirez L."/>
            <person name="Retterer J."/>
            <person name="Rodriguez A."/>
            <person name="Rogers S."/>
            <person name="Salamov A."/>
            <person name="Salazar A."/>
            <person name="Thayer N."/>
            <person name="Tice H."/>
            <person name="Tsai M."/>
            <person name="Ustaszewska A."/>
            <person name="Vo N."/>
            <person name="Wheeler J."/>
            <person name="Wu K."/>
            <person name="Yang J."/>
            <person name="Dickson M."/>
            <person name="Cheng J.-F."/>
            <person name="Eichler E.E."/>
            <person name="Olsen A."/>
            <person name="Pennacchio L.A."/>
            <person name="Rokhsar D.S."/>
            <person name="Richardson P."/>
            <person name="Lucas S.M."/>
            <person name="Myers R.M."/>
            <person name="Rubin E.M."/>
        </authorList>
    </citation>
    <scope>NUCLEOTIDE SEQUENCE [LARGE SCALE GENOMIC DNA]</scope>
</reference>
<reference key="5">
    <citation type="journal article" date="2004" name="Genome Res.">
        <title>The status, quality, and expansion of the NIH full-length cDNA project: the Mammalian Gene Collection (MGC).</title>
        <authorList>
            <consortium name="The MGC Project Team"/>
        </authorList>
    </citation>
    <scope>NUCLEOTIDE SEQUENCE [LARGE SCALE MRNA] (ISOFORM 1)</scope>
    <scope>VARIANT GLU-585</scope>
    <source>
        <tissue>Uterus</tissue>
    </source>
</reference>
<reference key="6">
    <citation type="submission" date="2000-03" db="EMBL/GenBank/DDBJ databases">
        <title>Identification of CpG islands hypermethylated in human tumors by the arbitrarily primed-PCR method.</title>
        <authorList>
            <person name="Kisseljov F."/>
            <person name="Petrenko A."/>
            <person name="Eshilev E."/>
            <person name="Kisseljova N."/>
        </authorList>
    </citation>
    <scope>NUCLEOTIDE SEQUENCE [GENOMIC DNA] OF 1-42</scope>
    <source>
        <tissue>Cervix</tissue>
    </source>
</reference>
<reference key="7">
    <citation type="journal article" date="2006" name="Cell">
        <title>Global, in vivo, and site-specific phosphorylation dynamics in signaling networks.</title>
        <authorList>
            <person name="Olsen J.V."/>
            <person name="Blagoev B."/>
            <person name="Gnad F."/>
            <person name="Macek B."/>
            <person name="Kumar C."/>
            <person name="Mortensen P."/>
            <person name="Mann M."/>
        </authorList>
    </citation>
    <scope>PHOSPHORYLATION [LARGE SCALE ANALYSIS] AT SER-609</scope>
    <scope>IDENTIFICATION BY MASS SPECTROMETRY [LARGE SCALE ANALYSIS]</scope>
    <source>
        <tissue>Cervix carcinoma</tissue>
    </source>
</reference>
<reference key="8">
    <citation type="journal article" date="2008" name="J. Proteome Res.">
        <title>Phosphoproteome of resting human platelets.</title>
        <authorList>
            <person name="Zahedi R.P."/>
            <person name="Lewandrowski U."/>
            <person name="Wiesner J."/>
            <person name="Wortelkamp S."/>
            <person name="Moebius J."/>
            <person name="Schuetz C."/>
            <person name="Walter U."/>
            <person name="Gambaryan S."/>
            <person name="Sickmann A."/>
        </authorList>
    </citation>
    <scope>IDENTIFICATION BY MASS SPECTROMETRY [LARGE SCALE ANALYSIS]</scope>
    <source>
        <tissue>Platelet</tissue>
    </source>
</reference>
<reference key="9">
    <citation type="journal article" date="2008" name="Proc. Natl. Acad. Sci. U.S.A.">
        <title>A quantitative atlas of mitotic phosphorylation.</title>
        <authorList>
            <person name="Dephoure N."/>
            <person name="Zhou C."/>
            <person name="Villen J."/>
            <person name="Beausoleil S.A."/>
            <person name="Bakalarski C.E."/>
            <person name="Elledge S.J."/>
            <person name="Gygi S.P."/>
        </authorList>
    </citation>
    <scope>PHOSPHORYLATION [LARGE SCALE ANALYSIS] AT SER-276</scope>
    <scope>IDENTIFICATION BY MASS SPECTROMETRY [LARGE SCALE ANALYSIS]</scope>
    <source>
        <tissue>Cervix carcinoma</tissue>
    </source>
</reference>
<reference key="10">
    <citation type="journal article" date="2009" name="Anal. Chem.">
        <title>Lys-N and trypsin cover complementary parts of the phosphoproteome in a refined SCX-based approach.</title>
        <authorList>
            <person name="Gauci S."/>
            <person name="Helbig A.O."/>
            <person name="Slijper M."/>
            <person name="Krijgsveld J."/>
            <person name="Heck A.J."/>
            <person name="Mohammed S."/>
        </authorList>
    </citation>
    <scope>IDENTIFICATION BY MASS SPECTROMETRY [LARGE SCALE ANALYSIS]</scope>
</reference>
<reference key="11">
    <citation type="journal article" date="2010" name="Sci. Signal.">
        <title>Quantitative phosphoproteomics reveals widespread full phosphorylation site occupancy during mitosis.</title>
        <authorList>
            <person name="Olsen J.V."/>
            <person name="Vermeulen M."/>
            <person name="Santamaria A."/>
            <person name="Kumar C."/>
            <person name="Miller M.L."/>
            <person name="Jensen L.J."/>
            <person name="Gnad F."/>
            <person name="Cox J."/>
            <person name="Jensen T.S."/>
            <person name="Nigg E.A."/>
            <person name="Brunak S."/>
            <person name="Mann M."/>
        </authorList>
    </citation>
    <scope>PHOSPHORYLATION [LARGE SCALE ANALYSIS] AT SER-276; SER-609; SER-750 AND SER-752</scope>
    <scope>IDENTIFICATION BY MASS SPECTROMETRY [LARGE SCALE ANALYSIS]</scope>
    <source>
        <tissue>Cervix carcinoma</tissue>
    </source>
</reference>
<reference key="12">
    <citation type="journal article" date="2011" name="Sci. Signal.">
        <title>System-wide temporal characterization of the proteome and phosphoproteome of human embryonic stem cell differentiation.</title>
        <authorList>
            <person name="Rigbolt K.T."/>
            <person name="Prokhorova T.A."/>
            <person name="Akimov V."/>
            <person name="Henningsen J."/>
            <person name="Johansen P.T."/>
            <person name="Kratchmarova I."/>
            <person name="Kassem M."/>
            <person name="Mann M."/>
            <person name="Olsen J.V."/>
            <person name="Blagoev B."/>
        </authorList>
    </citation>
    <scope>PHOSPHORYLATION [LARGE SCALE ANALYSIS] AT SER-276</scope>
    <scope>IDENTIFICATION BY MASS SPECTROMETRY [LARGE SCALE ANALYSIS]</scope>
</reference>
<reference key="13">
    <citation type="journal article" date="2013" name="J. Proteome Res.">
        <title>Toward a comprehensive characterization of a human cancer cell phosphoproteome.</title>
        <authorList>
            <person name="Zhou H."/>
            <person name="Di Palma S."/>
            <person name="Preisinger C."/>
            <person name="Peng M."/>
            <person name="Polat A.N."/>
            <person name="Heck A.J."/>
            <person name="Mohammed S."/>
        </authorList>
    </citation>
    <scope>PHOSPHORYLATION [LARGE SCALE ANALYSIS] AT SER-276 AND SER-609</scope>
    <scope>IDENTIFICATION BY MASS SPECTROMETRY [LARGE SCALE ANALYSIS]</scope>
    <source>
        <tissue>Cervix carcinoma</tissue>
        <tissue>Erythroleukemia</tissue>
    </source>
</reference>
<reference key="14">
    <citation type="journal article" date="2015" name="Proteomics">
        <title>N-terminome analysis of the human mitochondrial proteome.</title>
        <authorList>
            <person name="Vaca Jacome A.S."/>
            <person name="Rabilloud T."/>
            <person name="Schaeffer-Reiss C."/>
            <person name="Rompais M."/>
            <person name="Ayoub D."/>
            <person name="Lane L."/>
            <person name="Bairoch A."/>
            <person name="Van Dorsselaer A."/>
            <person name="Carapito C."/>
        </authorList>
    </citation>
    <scope>IDENTIFICATION BY MASS SPECTROMETRY [LARGE SCALE ANALYSIS]</scope>
</reference>
<reference key="15">
    <citation type="journal article" date="2009" name="Proc. Natl. Acad. Sci. U.S.A.">
        <title>Inositol pyrophosphate mediated pyrophosphorylation of AP3B1 regulates HIV-1 Gag release.</title>
        <authorList>
            <person name="Azevedo C."/>
            <person name="Burton A."/>
            <person name="Ruiz-Mateos E."/>
            <person name="Marsh M."/>
            <person name="Saiardi A."/>
        </authorList>
    </citation>
    <scope>PYROPHOSPHORYLATION</scope>
    <scope>INTERACTION WITH KIF3A</scope>
</reference>
<reference key="16">
    <citation type="journal article" date="1999" name="Mol. Cell">
        <title>Altered trafficking of lysosomal proteins in Hermansky-Pudlak syndrome due to mutations in the beta 3A subunit of the AP-3 adaptor.</title>
        <authorList>
            <person name="Dell'Angelica E.C."/>
            <person name="Shotelersuk V."/>
            <person name="Aguilar R.C."/>
            <person name="Gahl W.A."/>
            <person name="Bonifacino J.S."/>
        </authorList>
    </citation>
    <scope>VARIANTS HPS2 390-LEU--GLN-410 DEL AND ARG-580</scope>
</reference>
<reference key="17">
    <citation type="journal article" date="2011" name="BMC Syst. Biol.">
        <title>Initial characterization of the human central proteome.</title>
        <authorList>
            <person name="Burkard T.R."/>
            <person name="Planyavsky M."/>
            <person name="Kaupe I."/>
            <person name="Breitwieser F.P."/>
            <person name="Buerckstuemmer T."/>
            <person name="Bennett K.L."/>
            <person name="Superti-Furga G."/>
            <person name="Colinge J."/>
        </authorList>
    </citation>
    <scope>VARIANT [LARGE SCALE ANALYSIS] GLU-585</scope>
    <scope>IDENTIFICATION BY MASS SPECTROMETRY [LARGE SCALE ANALYSIS]</scope>
</reference>
<accession>O00203</accession>
<accession>E5RJ68</accession>
<accession>O00580</accession>
<accession>Q7Z393</accession>
<accession>Q9HD66</accession>
<sequence length="1094" mass="121320">MSSNSFPYNEQSGGGEATELGQEATSTISPSGAFGLFSSDLKKNEDLKQMLESNKDSAKLDAMKRIVGMIAKGKNASELFPAVVKNVASKNIEIKKLVYVYLVRYAEEQQDLALLSISTFQRALKDPNQLIRASALRVLSSIRVPIIVPIMMLAIKEASADLSPYVRKNAAHAIQKLYSLDPEQKEMLIEVIEKLLKDKSTLVAGSVVMAFEEVCPDRIDLIHKNYRKLCNLLVDVEEWGQVVIIHMLTRYARTQFVSPWKEGDELEDNGKNFYESDDDQKEKTDKKKKPYTMDPDHRLLIRNTKPLLQSRNAAVVMAVAQLYWHISPKSEAGIISKSLVRLLRSNREVQYIVLQNIATMSIQRKGMFEPYLKSFYVRSTDPTMIKTLKLEILTNLANEANISTLLREFQTYVKSQDKQFAAATIQTIGRCATNILEVTDTCLNGLVCLLSNRDEIVVAESVVVIKKLLQMQPAQHGEIIKHMAKLLDSITVPVARASILWLIGENCERVPKIAPDVLRKMAKSFTSEDDLVKLQILNLGAKLYLTNSKQTKLLTQYILNLGKYDQNYDIRDRTRFIRQLIVPNVKSGALSKYAKKIFLAQKPAPLLESPFKDRDHFQLGTLSHTLNIKATGYLELSNWPEVAPDPSVRNVEVIELAKEWTPAGKAKQENSAKKFYSESEEEEDSSDSSSDSESESGSESGEQGESGEEGDSNEDSSEDSSSEQDSESGRESGLENKRTAKRNSKAKGKSDSEDGEKENEKSKTSDSSNDESSSIEDSSSDSESESEPESESESRRVTKEKEKKTKQDRTPLTKDVSLLDLDDFNPVSTPVALPTPALSPSLMADLEGLHLSTSSSVISVSTPAFVPTKTHVLLHRMSGKGLAAHYFFPRQPCIFGDKMVSIQITLNNTTDRKIENIHIGEKKLPIGMKMHVFNPIDSLEPEGSITVSMGIDFCDSTQTASFQLCTKDDCFNVNIQPPVGELLLPVAMSEKDFKKEQGVLTGMNETSAVIIAAPQNFTPSVIFQKVVNVANVGAVPSGQDNIHRFAAKTVHSGSLMLVTVELKEGSTAQLIINTEKTVIGSVLLRELKPVLSQG</sequence>
<dbReference type="EMBL" id="U91931">
    <property type="protein sequence ID" value="AAD03778.1"/>
    <property type="molecule type" value="mRNA"/>
</dbReference>
<dbReference type="EMBL" id="U81504">
    <property type="protein sequence ID" value="AAB61638.1"/>
    <property type="molecule type" value="mRNA"/>
</dbReference>
<dbReference type="EMBL" id="BX538041">
    <property type="protein sequence ID" value="CAD97982.1"/>
    <property type="status" value="ALT_SEQ"/>
    <property type="molecule type" value="mRNA"/>
</dbReference>
<dbReference type="EMBL" id="AC024568">
    <property type="status" value="NOT_ANNOTATED_CDS"/>
    <property type="molecule type" value="Genomic_DNA"/>
</dbReference>
<dbReference type="EMBL" id="AC024578">
    <property type="status" value="NOT_ANNOTATED_CDS"/>
    <property type="molecule type" value="Genomic_DNA"/>
</dbReference>
<dbReference type="EMBL" id="AC104108">
    <property type="status" value="NOT_ANNOTATED_CDS"/>
    <property type="molecule type" value="Genomic_DNA"/>
</dbReference>
<dbReference type="EMBL" id="AC112197">
    <property type="status" value="NOT_ANNOTATED_CDS"/>
    <property type="molecule type" value="Genomic_DNA"/>
</dbReference>
<dbReference type="EMBL" id="BC038444">
    <property type="protein sequence ID" value="AAH38444.1"/>
    <property type="molecule type" value="mRNA"/>
</dbReference>
<dbReference type="EMBL" id="AF247736">
    <property type="protein sequence ID" value="AAG01739.1"/>
    <property type="molecule type" value="Genomic_DNA"/>
</dbReference>
<dbReference type="CCDS" id="CCDS4041.1">
    <molecule id="O00203-1"/>
</dbReference>
<dbReference type="CCDS" id="CCDS64186.1">
    <molecule id="O00203-3"/>
</dbReference>
<dbReference type="PIR" id="T50651">
    <property type="entry name" value="T50651"/>
</dbReference>
<dbReference type="PIR" id="T50652">
    <property type="entry name" value="T50652"/>
</dbReference>
<dbReference type="RefSeq" id="NP_001258698.1">
    <molecule id="O00203-3"/>
    <property type="nucleotide sequence ID" value="NM_001271769.2"/>
</dbReference>
<dbReference type="RefSeq" id="NP_003655.3">
    <molecule id="O00203-1"/>
    <property type="nucleotide sequence ID" value="NM_003664.4"/>
</dbReference>
<dbReference type="PDB" id="9C58">
    <property type="method" value="EM"/>
    <property type="resolution" value="4.70 A"/>
    <property type="chains" value="B=1-677"/>
</dbReference>
<dbReference type="PDB" id="9C59">
    <property type="method" value="EM"/>
    <property type="resolution" value="4.30 A"/>
    <property type="chains" value="B/b=1-677"/>
</dbReference>
<dbReference type="PDB" id="9C5A">
    <property type="method" value="EM"/>
    <property type="resolution" value="4.20 A"/>
    <property type="chains" value="B/b=1-677"/>
</dbReference>
<dbReference type="PDB" id="9C5B">
    <property type="method" value="EM"/>
    <property type="resolution" value="4.50 A"/>
    <property type="chains" value="B=1-677"/>
</dbReference>
<dbReference type="PDB" id="9C5C">
    <property type="method" value="EM"/>
    <property type="resolution" value="3.60 A"/>
    <property type="chains" value="B=40-650"/>
</dbReference>
<dbReference type="PDBsum" id="9C58"/>
<dbReference type="PDBsum" id="9C59"/>
<dbReference type="PDBsum" id="9C5A"/>
<dbReference type="PDBsum" id="9C5B"/>
<dbReference type="PDBsum" id="9C5C"/>
<dbReference type="EMDB" id="EMD-45207"/>
<dbReference type="EMDB" id="EMD-45208"/>
<dbReference type="EMDB" id="EMD-45209"/>
<dbReference type="EMDB" id="EMD-45210"/>
<dbReference type="EMDB" id="EMD-45211"/>
<dbReference type="EMDB" id="EMD-45212"/>
<dbReference type="EMDB" id="EMD-45213"/>
<dbReference type="EMDB" id="EMD-45214"/>
<dbReference type="SMR" id="O00203"/>
<dbReference type="BioGRID" id="114116">
    <property type="interactions" value="202"/>
</dbReference>
<dbReference type="ComplexPortal" id="CPX-5051">
    <property type="entry name" value="Ubiquitous AP-3 Adaptor complex, sigma3a variant"/>
</dbReference>
<dbReference type="ComplexPortal" id="CPX-5052">
    <property type="entry name" value="Ubiquitous AP-3 Adaptor complex, sigma3b variant"/>
</dbReference>
<dbReference type="CORUM" id="O00203"/>
<dbReference type="DIP" id="DIP-24208N"/>
<dbReference type="ELM" id="O00203"/>
<dbReference type="FunCoup" id="O00203">
    <property type="interactions" value="2381"/>
</dbReference>
<dbReference type="IntAct" id="O00203">
    <property type="interactions" value="90"/>
</dbReference>
<dbReference type="MINT" id="O00203"/>
<dbReference type="STRING" id="9606.ENSP00000255194"/>
<dbReference type="GlyGen" id="O00203">
    <property type="glycosylation" value="2 sites, 1 O-linked glycan (1 site)"/>
</dbReference>
<dbReference type="iPTMnet" id="O00203"/>
<dbReference type="MetOSite" id="O00203"/>
<dbReference type="PhosphoSitePlus" id="O00203"/>
<dbReference type="SwissPalm" id="O00203"/>
<dbReference type="BioMuta" id="AP3B1"/>
<dbReference type="jPOST" id="O00203"/>
<dbReference type="MassIVE" id="O00203"/>
<dbReference type="PaxDb" id="9606-ENSP00000255194"/>
<dbReference type="PeptideAtlas" id="O00203"/>
<dbReference type="ProteomicsDB" id="16507"/>
<dbReference type="ProteomicsDB" id="47775">
    <molecule id="O00203-1"/>
</dbReference>
<dbReference type="Pumba" id="O00203"/>
<dbReference type="Antibodypedia" id="24502">
    <property type="antibodies" value="145 antibodies from 30 providers"/>
</dbReference>
<dbReference type="DNASU" id="8546"/>
<dbReference type="Ensembl" id="ENST00000255194.11">
    <molecule id="O00203-1"/>
    <property type="protein sequence ID" value="ENSP00000255194.7"/>
    <property type="gene ID" value="ENSG00000132842.16"/>
</dbReference>
<dbReference type="Ensembl" id="ENST00000519295.7">
    <molecule id="O00203-3"/>
    <property type="protein sequence ID" value="ENSP00000430597.1"/>
    <property type="gene ID" value="ENSG00000132842.16"/>
</dbReference>
<dbReference type="GeneID" id="8546"/>
<dbReference type="KEGG" id="hsa:8546"/>
<dbReference type="MANE-Select" id="ENST00000255194.11">
    <property type="protein sequence ID" value="ENSP00000255194.7"/>
    <property type="RefSeq nucleotide sequence ID" value="NM_003664.5"/>
    <property type="RefSeq protein sequence ID" value="NP_003655.3"/>
</dbReference>
<dbReference type="UCSC" id="uc003kfj.5">
    <molecule id="O00203-1"/>
    <property type="organism name" value="human"/>
</dbReference>
<dbReference type="AGR" id="HGNC:566"/>
<dbReference type="CTD" id="8546"/>
<dbReference type="DisGeNET" id="8546"/>
<dbReference type="GeneCards" id="AP3B1"/>
<dbReference type="GeneReviews" id="AP3B1"/>
<dbReference type="HGNC" id="HGNC:566">
    <property type="gene designation" value="AP3B1"/>
</dbReference>
<dbReference type="HPA" id="ENSG00000132842">
    <property type="expression patterns" value="Low tissue specificity"/>
</dbReference>
<dbReference type="MalaCards" id="AP3B1"/>
<dbReference type="MIM" id="203300">
    <property type="type" value="phenotype"/>
</dbReference>
<dbReference type="MIM" id="603401">
    <property type="type" value="gene"/>
</dbReference>
<dbReference type="MIM" id="608233">
    <property type="type" value="phenotype"/>
</dbReference>
<dbReference type="neXtProt" id="NX_O00203"/>
<dbReference type="OpenTargets" id="ENSG00000132842"/>
<dbReference type="Orphanet" id="664500">
    <property type="disease" value="Hermansky-Pudlak syndrome due to AP3B1 deficiency"/>
</dbReference>
<dbReference type="PharmGKB" id="PA24857"/>
<dbReference type="VEuPathDB" id="HostDB:ENSG00000132842"/>
<dbReference type="eggNOG" id="KOG1060">
    <property type="taxonomic scope" value="Eukaryota"/>
</dbReference>
<dbReference type="GeneTree" id="ENSGT00940000157603"/>
<dbReference type="HOGENOM" id="CLU_006320_3_1_1"/>
<dbReference type="InParanoid" id="O00203"/>
<dbReference type="OMA" id="TFNPIDS"/>
<dbReference type="OrthoDB" id="302453at2759"/>
<dbReference type="PAN-GO" id="O00203">
    <property type="GO annotations" value="2 GO annotations based on evolutionary models"/>
</dbReference>
<dbReference type="PhylomeDB" id="O00203"/>
<dbReference type="TreeFam" id="TF314605"/>
<dbReference type="PathwayCommons" id="O00203"/>
<dbReference type="Reactome" id="R-HSA-432722">
    <property type="pathway name" value="Golgi Associated Vesicle Biogenesis"/>
</dbReference>
<dbReference type="Reactome" id="R-HSA-6802952">
    <property type="pathway name" value="Signaling by BRAF and RAF1 fusions"/>
</dbReference>
<dbReference type="SignaLink" id="O00203"/>
<dbReference type="SIGNOR" id="O00203"/>
<dbReference type="BioGRID-ORCS" id="8546">
    <property type="hits" value="63 hits in 1166 CRISPR screens"/>
</dbReference>
<dbReference type="CD-CODE" id="FB4E32DD">
    <property type="entry name" value="Presynaptic clusters and postsynaptic densities"/>
</dbReference>
<dbReference type="ChiTaRS" id="AP3B1">
    <property type="organism name" value="human"/>
</dbReference>
<dbReference type="GeneWiki" id="AP3B1"/>
<dbReference type="GenomeRNAi" id="8546"/>
<dbReference type="Pharos" id="O00203">
    <property type="development level" value="Tbio"/>
</dbReference>
<dbReference type="PRO" id="PR:O00203"/>
<dbReference type="Proteomes" id="UP000005640">
    <property type="component" value="Chromosome 5"/>
</dbReference>
<dbReference type="RNAct" id="O00203">
    <property type="molecule type" value="protein"/>
</dbReference>
<dbReference type="Bgee" id="ENSG00000132842">
    <property type="expression patterns" value="Expressed in tendon of biceps brachii and 202 other cell types or tissues"/>
</dbReference>
<dbReference type="ExpressionAtlas" id="O00203">
    <property type="expression patterns" value="baseline and differential"/>
</dbReference>
<dbReference type="GO" id="GO:0030123">
    <property type="term" value="C:AP-3 adaptor complex"/>
    <property type="evidence" value="ECO:0000303"/>
    <property type="project" value="ComplexPortal"/>
</dbReference>
<dbReference type="GO" id="GO:1904115">
    <property type="term" value="C:axon cytoplasm"/>
    <property type="evidence" value="ECO:0007669"/>
    <property type="project" value="GOC"/>
</dbReference>
<dbReference type="GO" id="GO:0030131">
    <property type="term" value="C:clathrin adaptor complex"/>
    <property type="evidence" value="ECO:0007669"/>
    <property type="project" value="InterPro"/>
</dbReference>
<dbReference type="GO" id="GO:0030665">
    <property type="term" value="C:clathrin-coated vesicle membrane"/>
    <property type="evidence" value="ECO:0007669"/>
    <property type="project" value="UniProtKB-SubCell"/>
</dbReference>
<dbReference type="GO" id="GO:0005769">
    <property type="term" value="C:early endosome"/>
    <property type="evidence" value="ECO:0000303"/>
    <property type="project" value="ComplexPortal"/>
</dbReference>
<dbReference type="GO" id="GO:0005794">
    <property type="term" value="C:Golgi apparatus"/>
    <property type="evidence" value="ECO:0000304"/>
    <property type="project" value="ProtInc"/>
</dbReference>
<dbReference type="GO" id="GO:0005765">
    <property type="term" value="C:lysosomal membrane"/>
    <property type="evidence" value="ECO:0007005"/>
    <property type="project" value="UniProtKB"/>
</dbReference>
<dbReference type="GO" id="GO:0016020">
    <property type="term" value="C:membrane"/>
    <property type="evidence" value="ECO:0007005"/>
    <property type="project" value="UniProtKB"/>
</dbReference>
<dbReference type="GO" id="GO:1990742">
    <property type="term" value="C:microvesicle"/>
    <property type="evidence" value="ECO:0007669"/>
    <property type="project" value="Ensembl"/>
</dbReference>
<dbReference type="GO" id="GO:0005739">
    <property type="term" value="C:mitochondrion"/>
    <property type="evidence" value="ECO:0007669"/>
    <property type="project" value="GOC"/>
</dbReference>
<dbReference type="GO" id="GO:0030742">
    <property type="term" value="F:GTP-dependent protein binding"/>
    <property type="evidence" value="ECO:0000353"/>
    <property type="project" value="ParkinsonsUK-UCL"/>
</dbReference>
<dbReference type="GO" id="GO:0019903">
    <property type="term" value="F:protein phosphatase binding"/>
    <property type="evidence" value="ECO:0000353"/>
    <property type="project" value="UniProtKB"/>
</dbReference>
<dbReference type="GO" id="GO:0008089">
    <property type="term" value="P:anterograde axonal transport"/>
    <property type="evidence" value="ECO:0000250"/>
    <property type="project" value="UniProtKB"/>
</dbReference>
<dbReference type="GO" id="GO:0048490">
    <property type="term" value="P:anterograde synaptic vesicle transport"/>
    <property type="evidence" value="ECO:0000250"/>
    <property type="project" value="UniProtKB"/>
</dbReference>
<dbReference type="GO" id="GO:0048007">
    <property type="term" value="P:antigen processing and presentation, exogenous lipid antigen via MHC class Ib"/>
    <property type="evidence" value="ECO:0007669"/>
    <property type="project" value="Ensembl"/>
</dbReference>
<dbReference type="GO" id="GO:0007596">
    <property type="term" value="P:blood coagulation"/>
    <property type="evidence" value="ECO:0007669"/>
    <property type="project" value="Ensembl"/>
</dbReference>
<dbReference type="GO" id="GO:0000902">
    <property type="term" value="P:cell morphogenesis"/>
    <property type="evidence" value="ECO:0007669"/>
    <property type="project" value="Ensembl"/>
</dbReference>
<dbReference type="GO" id="GO:0035654">
    <property type="term" value="P:clathrin-coated vesicle cargo loading, AP-3-mediated"/>
    <property type="evidence" value="ECO:0000303"/>
    <property type="project" value="ComplexPortal"/>
</dbReference>
<dbReference type="GO" id="GO:0090152">
    <property type="term" value="P:establishment of protein localization to mitochondrial membrane involved in mitochondrial fission"/>
    <property type="evidence" value="ECO:0007669"/>
    <property type="project" value="Ensembl"/>
</dbReference>
<dbReference type="GO" id="GO:0030851">
    <property type="term" value="P:granulocyte differentiation"/>
    <property type="evidence" value="ECO:0007669"/>
    <property type="project" value="Ensembl"/>
</dbReference>
<dbReference type="GO" id="GO:0002244">
    <property type="term" value="P:hematopoietic progenitor cell differentiation"/>
    <property type="evidence" value="ECO:0007669"/>
    <property type="project" value="Ensembl"/>
</dbReference>
<dbReference type="GO" id="GO:0048872">
    <property type="term" value="P:homeostasis of number of cells"/>
    <property type="evidence" value="ECO:0007669"/>
    <property type="project" value="Ensembl"/>
</dbReference>
<dbReference type="GO" id="GO:0006954">
    <property type="term" value="P:inflammatory response"/>
    <property type="evidence" value="ECO:0007669"/>
    <property type="project" value="Ensembl"/>
</dbReference>
<dbReference type="GO" id="GO:0006886">
    <property type="term" value="P:intracellular protein transport"/>
    <property type="evidence" value="ECO:0000304"/>
    <property type="project" value="ProtInc"/>
</dbReference>
<dbReference type="GO" id="GO:0046907">
    <property type="term" value="P:intracellular transport"/>
    <property type="evidence" value="ECO:0000303"/>
    <property type="project" value="ComplexPortal"/>
</dbReference>
<dbReference type="GO" id="GO:0006882">
    <property type="term" value="P:intracellular zinc ion homeostasis"/>
    <property type="evidence" value="ECO:0007669"/>
    <property type="project" value="Ensembl"/>
</dbReference>
<dbReference type="GO" id="GO:0060425">
    <property type="term" value="P:lung morphogenesis"/>
    <property type="evidence" value="ECO:0007669"/>
    <property type="project" value="Ensembl"/>
</dbReference>
<dbReference type="GO" id="GO:0007040">
    <property type="term" value="P:lysosome organization"/>
    <property type="evidence" value="ECO:0007669"/>
    <property type="project" value="Ensembl"/>
</dbReference>
<dbReference type="GO" id="GO:1903232">
    <property type="term" value="P:melanosome assembly"/>
    <property type="evidence" value="ECO:0000303"/>
    <property type="project" value="ComplexPortal"/>
</dbReference>
<dbReference type="GO" id="GO:0032438">
    <property type="term" value="P:melanosome organization"/>
    <property type="evidence" value="ECO:0000315"/>
    <property type="project" value="UniProtKB"/>
</dbReference>
<dbReference type="GO" id="GO:0042789">
    <property type="term" value="P:mRNA transcription by RNA polymerase II"/>
    <property type="evidence" value="ECO:0007669"/>
    <property type="project" value="Ensembl"/>
</dbReference>
<dbReference type="GO" id="GO:0060155">
    <property type="term" value="P:platelet dense granule organization"/>
    <property type="evidence" value="ECO:0000303"/>
    <property type="project" value="ComplexPortal"/>
</dbReference>
<dbReference type="GO" id="GO:0051138">
    <property type="term" value="P:positive regulation of NK T cell differentiation"/>
    <property type="evidence" value="ECO:0007669"/>
    <property type="project" value="Ensembl"/>
</dbReference>
<dbReference type="GO" id="GO:0045944">
    <property type="term" value="P:positive regulation of transcription by RNA polymerase II"/>
    <property type="evidence" value="ECO:0007669"/>
    <property type="project" value="Ensembl"/>
</dbReference>
<dbReference type="GO" id="GO:0034394">
    <property type="term" value="P:protein localization to cell surface"/>
    <property type="evidence" value="ECO:0007669"/>
    <property type="project" value="Ensembl"/>
</dbReference>
<dbReference type="GO" id="GO:0036211">
    <property type="term" value="P:protein modification process"/>
    <property type="evidence" value="ECO:0007669"/>
    <property type="project" value="Ensembl"/>
</dbReference>
<dbReference type="GO" id="GO:0006622">
    <property type="term" value="P:protein targeting to lysosome"/>
    <property type="evidence" value="ECO:0007669"/>
    <property type="project" value="Ensembl"/>
</dbReference>
<dbReference type="GO" id="GO:0003016">
    <property type="term" value="P:respiratory system process"/>
    <property type="evidence" value="ECO:0007669"/>
    <property type="project" value="Ensembl"/>
</dbReference>
<dbReference type="GO" id="GO:0007338">
    <property type="term" value="P:single fertilization"/>
    <property type="evidence" value="ECO:0007669"/>
    <property type="project" value="Ensembl"/>
</dbReference>
<dbReference type="GO" id="GO:0098773">
    <property type="term" value="P:skin epidermis development"/>
    <property type="evidence" value="ECO:0007669"/>
    <property type="project" value="Ensembl"/>
</dbReference>
<dbReference type="GO" id="GO:0007283">
    <property type="term" value="P:spermatogenesis"/>
    <property type="evidence" value="ECO:0007669"/>
    <property type="project" value="Ensembl"/>
</dbReference>
<dbReference type="GO" id="GO:0002224">
    <property type="term" value="P:toll-like receptor signaling pathway"/>
    <property type="evidence" value="ECO:0007669"/>
    <property type="project" value="Ensembl"/>
</dbReference>
<dbReference type="GO" id="GO:0016192">
    <property type="term" value="P:vesicle-mediated transport"/>
    <property type="evidence" value="ECO:0000303"/>
    <property type="project" value="ComplexPortal"/>
</dbReference>
<dbReference type="Gene3D" id="1.25.10.10">
    <property type="entry name" value="Leucine-rich Repeat Variant"/>
    <property type="match status" value="1"/>
</dbReference>
<dbReference type="InterPro" id="IPR026740">
    <property type="entry name" value="AP3_beta"/>
</dbReference>
<dbReference type="InterPro" id="IPR056314">
    <property type="entry name" value="AP3B1/2_C"/>
</dbReference>
<dbReference type="InterPro" id="IPR029394">
    <property type="entry name" value="AP3B1_Ser"/>
</dbReference>
<dbReference type="InterPro" id="IPR029390">
    <property type="entry name" value="AP3B_C"/>
</dbReference>
<dbReference type="InterPro" id="IPR026739">
    <property type="entry name" value="AP_beta"/>
</dbReference>
<dbReference type="InterPro" id="IPR011989">
    <property type="entry name" value="ARM-like"/>
</dbReference>
<dbReference type="InterPro" id="IPR016024">
    <property type="entry name" value="ARM-type_fold"/>
</dbReference>
<dbReference type="InterPro" id="IPR015151">
    <property type="entry name" value="B-adaptin_app_sub_C"/>
</dbReference>
<dbReference type="InterPro" id="IPR002553">
    <property type="entry name" value="Clathrin/coatomer_adapt-like_N"/>
</dbReference>
<dbReference type="PANTHER" id="PTHR11134">
    <property type="entry name" value="ADAPTOR COMPLEX SUBUNIT BETA FAMILY MEMBER"/>
    <property type="match status" value="1"/>
</dbReference>
<dbReference type="Pfam" id="PF01602">
    <property type="entry name" value="Adaptin_N"/>
    <property type="match status" value="1"/>
</dbReference>
<dbReference type="Pfam" id="PF14796">
    <property type="entry name" value="AP3B1_C"/>
    <property type="match status" value="1"/>
</dbReference>
<dbReference type="Pfam" id="PF24080">
    <property type="entry name" value="AP3B1_C_2"/>
    <property type="match status" value="1"/>
</dbReference>
<dbReference type="Pfam" id="PF14797">
    <property type="entry name" value="SEEEED"/>
    <property type="match status" value="1"/>
</dbReference>
<dbReference type="PIRSF" id="PIRSF037096">
    <property type="entry name" value="AP3_complex_beta"/>
    <property type="match status" value="1"/>
</dbReference>
<dbReference type="SMART" id="SM01355">
    <property type="entry name" value="AP3B1_C"/>
    <property type="match status" value="1"/>
</dbReference>
<dbReference type="SMART" id="SM01020">
    <property type="entry name" value="B2-adapt-app_C"/>
    <property type="match status" value="1"/>
</dbReference>
<dbReference type="SUPFAM" id="SSF48371">
    <property type="entry name" value="ARM repeat"/>
    <property type="match status" value="1"/>
</dbReference>
<name>AP3B1_HUMAN</name>
<keyword id="KW-0002">3D-structure</keyword>
<keyword id="KW-0015">Albinism</keyword>
<keyword id="KW-0025">Alternative splicing</keyword>
<keyword id="KW-0968">Cytoplasmic vesicle</keyword>
<keyword id="KW-0225">Disease variant</keyword>
<keyword id="KW-0333">Golgi apparatus</keyword>
<keyword id="KW-0363">Hermansky-Pudlak syndrome</keyword>
<keyword id="KW-0472">Membrane</keyword>
<keyword id="KW-0597">Phosphoprotein</keyword>
<keyword id="KW-0653">Protein transport</keyword>
<keyword id="KW-1267">Proteomics identification</keyword>
<keyword id="KW-1185">Reference proteome</keyword>
<keyword id="KW-0813">Transport</keyword>
<gene>
    <name type="primary">AP3B1</name>
    <name type="synonym">ADTB3A</name>
</gene>